<keyword id="KW-0963">Cytoplasm</keyword>
<keyword id="KW-0479">Metal-binding</keyword>
<keyword id="KW-0520">NAD</keyword>
<keyword id="KW-0560">Oxidoreductase</keyword>
<keyword id="KW-0862">Zinc</keyword>
<comment type="function">
    <text evidence="2">Has high formaldehyde dehydrogenase activity in the presence of glutathione and catalyzes the oxidation of normal alcohols in a reaction that is not GSH-dependent. In addition, hemithiolacetals other than those formed from GSH, including omega-thiol fatty acids, also are substrates. Also acts as a S-nitroso-glutathione reductase by catalyzing the NADH-dependent reduction of S-nitrosoglutathione.</text>
</comment>
<comment type="catalytic activity">
    <reaction evidence="2">
        <text>S-(hydroxymethyl)glutathione + NADP(+) = S-formylglutathione + NADPH + H(+)</text>
        <dbReference type="Rhea" id="RHEA:19981"/>
        <dbReference type="ChEBI" id="CHEBI:15378"/>
        <dbReference type="ChEBI" id="CHEBI:57688"/>
        <dbReference type="ChEBI" id="CHEBI:57783"/>
        <dbReference type="ChEBI" id="CHEBI:58349"/>
        <dbReference type="ChEBI" id="CHEBI:58758"/>
        <dbReference type="EC" id="1.1.1.284"/>
    </reaction>
</comment>
<comment type="catalytic activity">
    <reaction evidence="2">
        <text>S-(hydroxymethyl)glutathione + NAD(+) = S-formylglutathione + NADH + H(+)</text>
        <dbReference type="Rhea" id="RHEA:19985"/>
        <dbReference type="ChEBI" id="CHEBI:15378"/>
        <dbReference type="ChEBI" id="CHEBI:57540"/>
        <dbReference type="ChEBI" id="CHEBI:57688"/>
        <dbReference type="ChEBI" id="CHEBI:57945"/>
        <dbReference type="ChEBI" id="CHEBI:58758"/>
        <dbReference type="EC" id="1.1.1.284"/>
    </reaction>
</comment>
<comment type="catalytic activity">
    <reaction evidence="2">
        <text>a primary alcohol + NAD(+) = an aldehyde + NADH + H(+)</text>
        <dbReference type="Rhea" id="RHEA:10736"/>
        <dbReference type="ChEBI" id="CHEBI:15378"/>
        <dbReference type="ChEBI" id="CHEBI:15734"/>
        <dbReference type="ChEBI" id="CHEBI:17478"/>
        <dbReference type="ChEBI" id="CHEBI:57540"/>
        <dbReference type="ChEBI" id="CHEBI:57945"/>
        <dbReference type="EC" id="1.1.1.1"/>
    </reaction>
</comment>
<comment type="catalytic activity">
    <reaction evidence="2">
        <text>a secondary alcohol + NAD(+) = a ketone + NADH + H(+)</text>
        <dbReference type="Rhea" id="RHEA:10740"/>
        <dbReference type="ChEBI" id="CHEBI:15378"/>
        <dbReference type="ChEBI" id="CHEBI:17087"/>
        <dbReference type="ChEBI" id="CHEBI:35681"/>
        <dbReference type="ChEBI" id="CHEBI:57540"/>
        <dbReference type="ChEBI" id="CHEBI:57945"/>
        <dbReference type="EC" id="1.1.1.1"/>
    </reaction>
</comment>
<comment type="catalytic activity">
    <reaction evidence="2">
        <text>S-nitrosoglutathione + NADH + H(+) = S-(hydroxysulfenamide)glutathione + NAD(+)</text>
        <dbReference type="Rhea" id="RHEA:78371"/>
        <dbReference type="ChEBI" id="CHEBI:15378"/>
        <dbReference type="ChEBI" id="CHEBI:57540"/>
        <dbReference type="ChEBI" id="CHEBI:57945"/>
        <dbReference type="ChEBI" id="CHEBI:145544"/>
        <dbReference type="ChEBI" id="CHEBI:229723"/>
    </reaction>
    <physiologicalReaction direction="left-to-right" evidence="2">
        <dbReference type="Rhea" id="RHEA:78372"/>
    </physiologicalReaction>
</comment>
<comment type="cofactor">
    <cofactor evidence="1">
        <name>Zn(2+)</name>
        <dbReference type="ChEBI" id="CHEBI:29105"/>
    </cofactor>
    <text evidence="1">Binds 2 Zn(2+) ions per subunit.</text>
</comment>
<comment type="subunit">
    <text evidence="2">Homodimer.</text>
</comment>
<comment type="subcellular location">
    <subcellularLocation>
        <location evidence="2">Cytoplasm</location>
    </subcellularLocation>
</comment>
<comment type="similarity">
    <text evidence="3">Belongs to the zinc-containing alcohol dehydrogenase family. Class-III subfamily.</text>
</comment>
<evidence type="ECO:0000250" key="1">
    <source>
        <dbReference type="UniProtKB" id="P11766"/>
    </source>
</evidence>
<evidence type="ECO:0000250" key="2">
    <source>
        <dbReference type="UniProtKB" id="P25437"/>
    </source>
</evidence>
<evidence type="ECO:0000305" key="3"/>
<dbReference type="EC" id="1.1.1.284"/>
<dbReference type="EC" id="1.1.1.1"/>
<dbReference type="EC" id="1.1.1.-"/>
<dbReference type="EMBL" id="CP000802">
    <property type="protein sequence ID" value="ABV04808.1"/>
    <property type="molecule type" value="Genomic_DNA"/>
</dbReference>
<dbReference type="RefSeq" id="WP_000842102.1">
    <property type="nucleotide sequence ID" value="NC_009800.1"/>
</dbReference>
<dbReference type="SMR" id="A7ZX04"/>
<dbReference type="GeneID" id="93777099"/>
<dbReference type="KEGG" id="ecx:EcHS_A0421"/>
<dbReference type="HOGENOM" id="CLU_026673_14_0_6"/>
<dbReference type="GO" id="GO:0005829">
    <property type="term" value="C:cytosol"/>
    <property type="evidence" value="ECO:0007669"/>
    <property type="project" value="TreeGrafter"/>
</dbReference>
<dbReference type="GO" id="GO:0004022">
    <property type="term" value="F:alcohol dehydrogenase (NAD+) activity"/>
    <property type="evidence" value="ECO:0007669"/>
    <property type="project" value="UniProtKB-EC"/>
</dbReference>
<dbReference type="GO" id="GO:0106322">
    <property type="term" value="F:S-(hydroxymethyl)glutathione dehydrogenase (NAD+) activity"/>
    <property type="evidence" value="ECO:0007669"/>
    <property type="project" value="RHEA"/>
</dbReference>
<dbReference type="GO" id="GO:0106321">
    <property type="term" value="F:S-(hydroxymethyl)glutathione dehydrogenase (NADP+) activity"/>
    <property type="evidence" value="ECO:0007669"/>
    <property type="project" value="RHEA"/>
</dbReference>
<dbReference type="GO" id="GO:0080007">
    <property type="term" value="F:S-nitrosoglutathione reductase (NADH) activity"/>
    <property type="evidence" value="ECO:0007669"/>
    <property type="project" value="RHEA"/>
</dbReference>
<dbReference type="GO" id="GO:0008270">
    <property type="term" value="F:zinc ion binding"/>
    <property type="evidence" value="ECO:0007669"/>
    <property type="project" value="InterPro"/>
</dbReference>
<dbReference type="GO" id="GO:0046294">
    <property type="term" value="P:formaldehyde catabolic process"/>
    <property type="evidence" value="ECO:0007669"/>
    <property type="project" value="InterPro"/>
</dbReference>
<dbReference type="CDD" id="cd08300">
    <property type="entry name" value="alcohol_DH_class_III"/>
    <property type="match status" value="1"/>
</dbReference>
<dbReference type="FunFam" id="3.40.50.720:FF:000003">
    <property type="entry name" value="S-(hydroxymethyl)glutathione dehydrogenase"/>
    <property type="match status" value="1"/>
</dbReference>
<dbReference type="FunFam" id="3.90.180.10:FF:000001">
    <property type="entry name" value="S-(hydroxymethyl)glutathione dehydrogenase"/>
    <property type="match status" value="1"/>
</dbReference>
<dbReference type="Gene3D" id="3.90.180.10">
    <property type="entry name" value="Medium-chain alcohol dehydrogenases, catalytic domain"/>
    <property type="match status" value="1"/>
</dbReference>
<dbReference type="Gene3D" id="3.40.50.720">
    <property type="entry name" value="NAD(P)-binding Rossmann-like Domain"/>
    <property type="match status" value="1"/>
</dbReference>
<dbReference type="InterPro" id="IPR013149">
    <property type="entry name" value="ADH-like_C"/>
</dbReference>
<dbReference type="InterPro" id="IPR013154">
    <property type="entry name" value="ADH-like_N"/>
</dbReference>
<dbReference type="InterPro" id="IPR014183">
    <property type="entry name" value="ADH_3"/>
</dbReference>
<dbReference type="InterPro" id="IPR002328">
    <property type="entry name" value="ADH_Zn_CS"/>
</dbReference>
<dbReference type="InterPro" id="IPR011032">
    <property type="entry name" value="GroES-like_sf"/>
</dbReference>
<dbReference type="InterPro" id="IPR036291">
    <property type="entry name" value="NAD(P)-bd_dom_sf"/>
</dbReference>
<dbReference type="InterPro" id="IPR020843">
    <property type="entry name" value="PKS_ER"/>
</dbReference>
<dbReference type="NCBIfam" id="TIGR02818">
    <property type="entry name" value="adh_III_F_hyde"/>
    <property type="match status" value="1"/>
</dbReference>
<dbReference type="PANTHER" id="PTHR43880">
    <property type="entry name" value="ALCOHOL DEHYDROGENASE"/>
    <property type="match status" value="1"/>
</dbReference>
<dbReference type="PANTHER" id="PTHR43880:SF12">
    <property type="entry name" value="ALCOHOL DEHYDROGENASE CLASS-3"/>
    <property type="match status" value="1"/>
</dbReference>
<dbReference type="Pfam" id="PF08240">
    <property type="entry name" value="ADH_N"/>
    <property type="match status" value="1"/>
</dbReference>
<dbReference type="Pfam" id="PF00107">
    <property type="entry name" value="ADH_zinc_N"/>
    <property type="match status" value="1"/>
</dbReference>
<dbReference type="SMART" id="SM00829">
    <property type="entry name" value="PKS_ER"/>
    <property type="match status" value="1"/>
</dbReference>
<dbReference type="SUPFAM" id="SSF50129">
    <property type="entry name" value="GroES-like"/>
    <property type="match status" value="2"/>
</dbReference>
<dbReference type="SUPFAM" id="SSF51735">
    <property type="entry name" value="NAD(P)-binding Rossmann-fold domains"/>
    <property type="match status" value="1"/>
</dbReference>
<dbReference type="PROSITE" id="PS00059">
    <property type="entry name" value="ADH_ZINC"/>
    <property type="match status" value="1"/>
</dbReference>
<accession>A7ZX04</accession>
<sequence length="369" mass="39333">MKSRAAVAFAPGKPLEIVEIDVAPPKKGEVLIKVTHTGVCHTDAFTLSGDDPEGVFPVVLGHEGAGVVVEVGEGVTSVKPGDHVIPLYTAECGECEFCRSGKTNLCVAVRETQGKGLMPDGTTRFSYNGQPLYHYMGCSTFSEYTVVAEVSLAKINPEANHEHVCLLGCGVTTGIGAVHNTAKVQPGDSVAVFGLGAIGLAVVQGARQAKAGRIIAIDTNPKKFDLARRFGATDCINPNDYDKPIKDVLLDINKWGIDHTFECIGNVNVMRAALESAHRGWGQSVIIGVAGSGQEISTRPFQLVTGRVWKGSAFGGVKGRSQLPGMVEDAMKGDIDLEPFVTHTMSLDEINDAFDLMHEGKSIRTVIRY</sequence>
<protein>
    <recommendedName>
        <fullName>S-(hydroxymethyl)glutathione dehydrogenase</fullName>
        <ecNumber>1.1.1.284</ecNumber>
    </recommendedName>
    <alternativeName>
        <fullName>Alcohol dehydrogenase class-3</fullName>
        <ecNumber>1.1.1.1</ecNumber>
    </alternativeName>
    <alternativeName>
        <fullName>Alcohol dehydrogenase class-III</fullName>
    </alternativeName>
    <alternativeName>
        <fullName>Glutathione-dependent formaldehyde dehydrogenase</fullName>
        <shortName>FALDH</shortName>
        <shortName>FDH</shortName>
        <shortName>GSH-FDH</shortName>
        <ecNumber>1.1.1.-</ecNumber>
    </alternativeName>
</protein>
<organism>
    <name type="scientific">Escherichia coli O9:H4 (strain HS)</name>
    <dbReference type="NCBI Taxonomy" id="331112"/>
    <lineage>
        <taxon>Bacteria</taxon>
        <taxon>Pseudomonadati</taxon>
        <taxon>Pseudomonadota</taxon>
        <taxon>Gammaproteobacteria</taxon>
        <taxon>Enterobacterales</taxon>
        <taxon>Enterobacteriaceae</taxon>
        <taxon>Escherichia</taxon>
    </lineage>
</organism>
<reference key="1">
    <citation type="journal article" date="2008" name="J. Bacteriol.">
        <title>The pangenome structure of Escherichia coli: comparative genomic analysis of E. coli commensal and pathogenic isolates.</title>
        <authorList>
            <person name="Rasko D.A."/>
            <person name="Rosovitz M.J."/>
            <person name="Myers G.S.A."/>
            <person name="Mongodin E.F."/>
            <person name="Fricke W.F."/>
            <person name="Gajer P."/>
            <person name="Crabtree J."/>
            <person name="Sebaihia M."/>
            <person name="Thomson N.R."/>
            <person name="Chaudhuri R."/>
            <person name="Henderson I.R."/>
            <person name="Sperandio V."/>
            <person name="Ravel J."/>
        </authorList>
    </citation>
    <scope>NUCLEOTIDE SEQUENCE [LARGE SCALE GENOMIC DNA]</scope>
    <source>
        <strain>HS</strain>
    </source>
</reference>
<gene>
    <name type="primary">frmA</name>
    <name type="ordered locus">EcHS_A0421</name>
</gene>
<feature type="chain" id="PRO_0000341291" description="S-(hydroxymethyl)glutathione dehydrogenase">
    <location>
        <begin position="1"/>
        <end position="369"/>
    </location>
</feature>
<feature type="binding site" evidence="1">
    <location>
        <position position="40"/>
    </location>
    <ligand>
        <name>Zn(2+)</name>
        <dbReference type="ChEBI" id="CHEBI:29105"/>
        <label>1</label>
        <note>catalytic</note>
    </ligand>
</feature>
<feature type="binding site" evidence="1">
    <location>
        <position position="62"/>
    </location>
    <ligand>
        <name>Zn(2+)</name>
        <dbReference type="ChEBI" id="CHEBI:29105"/>
        <label>1</label>
        <note>catalytic</note>
    </ligand>
</feature>
<feature type="binding site" evidence="1">
    <location>
        <position position="92"/>
    </location>
    <ligand>
        <name>Zn(2+)</name>
        <dbReference type="ChEBI" id="CHEBI:29105"/>
        <label>2</label>
    </ligand>
</feature>
<feature type="binding site" evidence="1">
    <location>
        <position position="95"/>
    </location>
    <ligand>
        <name>Zn(2+)</name>
        <dbReference type="ChEBI" id="CHEBI:29105"/>
        <label>2</label>
    </ligand>
</feature>
<feature type="binding site" evidence="1">
    <location>
        <position position="98"/>
    </location>
    <ligand>
        <name>Zn(2+)</name>
        <dbReference type="ChEBI" id="CHEBI:29105"/>
        <label>2</label>
    </ligand>
</feature>
<feature type="binding site" evidence="1">
    <location>
        <position position="106"/>
    </location>
    <ligand>
        <name>Zn(2+)</name>
        <dbReference type="ChEBI" id="CHEBI:29105"/>
        <label>2</label>
    </ligand>
</feature>
<feature type="binding site" evidence="1">
    <location>
        <position position="169"/>
    </location>
    <ligand>
        <name>Zn(2+)</name>
        <dbReference type="ChEBI" id="CHEBI:29105"/>
        <label>1</label>
        <note>catalytic</note>
    </ligand>
</feature>
<name>FRMA_ECOHS</name>
<proteinExistence type="inferred from homology"/>